<name>TSIS_WMSV</name>
<protein>
    <recommendedName>
        <fullName>PDGF-related-transforming protein sis</fullName>
    </recommendedName>
    <alternativeName>
        <fullName>p28sis</fullName>
    </alternativeName>
</protein>
<proteinExistence type="inferred from homology"/>
<gene>
    <name type="primary">V-SIS</name>
</gene>
<dbReference type="EMBL" id="V01201">
    <property type="protein sequence ID" value="CAA24516.1"/>
    <property type="status" value="ALT_INIT"/>
    <property type="molecule type" value="Genomic_DNA"/>
</dbReference>
<dbReference type="PIR" id="A01381">
    <property type="entry name" value="TVMVSS"/>
</dbReference>
<dbReference type="RefSeq" id="YP_001165471.2">
    <property type="nucleotide sequence ID" value="NC_009424.4"/>
</dbReference>
<dbReference type="RefSeq" id="YP_003580185.1">
    <property type="nucleotide sequence ID" value="NC_009424.4"/>
</dbReference>
<dbReference type="SMR" id="P01128"/>
<dbReference type="KEGG" id="vg:5176147"/>
<dbReference type="Proteomes" id="UP000203831">
    <property type="component" value="Genome"/>
</dbReference>
<dbReference type="GO" id="GO:0005615">
    <property type="term" value="C:extracellular space"/>
    <property type="evidence" value="ECO:0007669"/>
    <property type="project" value="TreeGrafter"/>
</dbReference>
<dbReference type="GO" id="GO:0016020">
    <property type="term" value="C:membrane"/>
    <property type="evidence" value="ECO:0007669"/>
    <property type="project" value="InterPro"/>
</dbReference>
<dbReference type="GO" id="GO:0008083">
    <property type="term" value="F:growth factor activity"/>
    <property type="evidence" value="ECO:0007669"/>
    <property type="project" value="UniProtKB-KW"/>
</dbReference>
<dbReference type="GO" id="GO:0005161">
    <property type="term" value="F:platelet-derived growth factor receptor binding"/>
    <property type="evidence" value="ECO:0007669"/>
    <property type="project" value="TreeGrafter"/>
</dbReference>
<dbReference type="GO" id="GO:0048008">
    <property type="term" value="P:platelet-derived growth factor receptor signaling pathway"/>
    <property type="evidence" value="ECO:0007669"/>
    <property type="project" value="TreeGrafter"/>
</dbReference>
<dbReference type="GO" id="GO:0030335">
    <property type="term" value="P:positive regulation of cell migration"/>
    <property type="evidence" value="ECO:0007669"/>
    <property type="project" value="TreeGrafter"/>
</dbReference>
<dbReference type="GO" id="GO:0008284">
    <property type="term" value="P:positive regulation of cell population proliferation"/>
    <property type="evidence" value="ECO:0007669"/>
    <property type="project" value="UniProtKB-ARBA"/>
</dbReference>
<dbReference type="GO" id="GO:0070374">
    <property type="term" value="P:positive regulation of ERK1 and ERK2 cascade"/>
    <property type="evidence" value="ECO:0007669"/>
    <property type="project" value="TreeGrafter"/>
</dbReference>
<dbReference type="GO" id="GO:0051897">
    <property type="term" value="P:positive regulation of phosphatidylinositol 3-kinase/protein kinase B signal transduction"/>
    <property type="evidence" value="ECO:0007669"/>
    <property type="project" value="TreeGrafter"/>
</dbReference>
<dbReference type="CDD" id="cd00135">
    <property type="entry name" value="PDGF"/>
    <property type="match status" value="1"/>
</dbReference>
<dbReference type="FunFam" id="2.10.90.10:FF:000023">
    <property type="entry name" value="Platelet-derived growth factor subunit B"/>
    <property type="match status" value="1"/>
</dbReference>
<dbReference type="Gene3D" id="2.10.90.10">
    <property type="entry name" value="Cystine-knot cytokines"/>
    <property type="match status" value="1"/>
</dbReference>
<dbReference type="InterPro" id="IPR029034">
    <property type="entry name" value="Cystine-knot_cytokine"/>
</dbReference>
<dbReference type="InterPro" id="IPR023581">
    <property type="entry name" value="PD_growth_factor_CS"/>
</dbReference>
<dbReference type="InterPro" id="IPR000072">
    <property type="entry name" value="PDGF/VEGF_dom"/>
</dbReference>
<dbReference type="InterPro" id="IPR006782">
    <property type="entry name" value="PDGF_N"/>
</dbReference>
<dbReference type="PANTHER" id="PTHR11633">
    <property type="entry name" value="PLATELET-DERIVED GROWTH FACTOR"/>
    <property type="match status" value="1"/>
</dbReference>
<dbReference type="PANTHER" id="PTHR11633:SF2">
    <property type="entry name" value="PLATELET-DERIVED GROWTH FACTOR SUBUNIT B"/>
    <property type="match status" value="1"/>
</dbReference>
<dbReference type="Pfam" id="PF00341">
    <property type="entry name" value="PDGF"/>
    <property type="match status" value="1"/>
</dbReference>
<dbReference type="Pfam" id="PF04692">
    <property type="entry name" value="PDGF_N"/>
    <property type="match status" value="1"/>
</dbReference>
<dbReference type="SMART" id="SM00141">
    <property type="entry name" value="PDGF"/>
    <property type="match status" value="1"/>
</dbReference>
<dbReference type="SUPFAM" id="SSF57501">
    <property type="entry name" value="Cystine-knot cytokines"/>
    <property type="match status" value="1"/>
</dbReference>
<dbReference type="PROSITE" id="PS00249">
    <property type="entry name" value="PDGF_1"/>
    <property type="match status" value="1"/>
</dbReference>
<dbReference type="PROSITE" id="PS50278">
    <property type="entry name" value="PDGF_2"/>
    <property type="match status" value="1"/>
</dbReference>
<reference key="1">
    <citation type="journal article" date="1983" name="Proc. Natl. Acad. Sci. U.S.A.">
        <title>Nucleotide sequence of the simian sarcoma virus genome: demonstration that its acquired cellular sequences encode the transforming gene product p28sis.</title>
        <authorList>
            <person name="Devare S.G."/>
            <person name="Reddy E.P."/>
            <person name="Law J.D."/>
            <person name="Robbins K.C."/>
            <person name="Aaronson S.A."/>
        </authorList>
    </citation>
    <scope>NUCLEOTIDE SEQUENCE [GENOMIC DNA]</scope>
</reference>
<evidence type="ECO:0000256" key="1">
    <source>
        <dbReference type="SAM" id="MobiDB-lite"/>
    </source>
</evidence>
<evidence type="ECO:0000305" key="2"/>
<feature type="chain" id="PRO_0000162360" description="PDGF-related-transforming protein sis">
    <location>
        <begin position="1"/>
        <end position="226"/>
    </location>
</feature>
<feature type="region of interest" description="Disordered" evidence="1">
    <location>
        <begin position="201"/>
        <end position="226"/>
    </location>
</feature>
<feature type="compositionally biased region" description="Basic residues" evidence="1">
    <location>
        <begin position="201"/>
        <end position="215"/>
    </location>
</feature>
<comment type="similarity">
    <text evidence="2">Belongs to the PDGF/VEGF growth factor family.</text>
</comment>
<comment type="sequence caution" evidence="2">
    <conflict type="erroneous initiation">
        <sequence resource="EMBL-CDS" id="CAA24516"/>
    </conflict>
</comment>
<organism>
    <name type="scientific">Woolly monkey sarcoma virus</name>
    <name type="common">WMSV</name>
    <name type="synonym">Simian sarcoma-associated virus</name>
    <dbReference type="NCBI Taxonomy" id="11970"/>
    <lineage>
        <taxon>Viruses</taxon>
        <taxon>Riboviria</taxon>
        <taxon>Pararnavirae</taxon>
        <taxon>Artverviricota</taxon>
        <taxon>Revtraviricetes</taxon>
        <taxon>Ortervirales</taxon>
        <taxon>Retroviridae</taxon>
        <taxon>Orthoretrovirinae</taxon>
        <taxon>Gammaretrovirus</taxon>
    </lineage>
</organism>
<sequence>MTLTWQGDPIPEELYKMLSGHSIRSFDDLQRLLQGDSGKEDGAELDLNMTRSHSGGELESLARGKRSLGSLSVAEPAMIAECKTRTEVFEISRRLIDRTNANFLVWPPCVEVQRCSGCCNNRNVQCRPTQVQLRPVQVRKIEIVRKKPIFKKATVTLEDHLACKCEIVAAARAVTRSPGTSQEQRAKTTQSRVTIRTVRVRRPPKGKHRKCKHTHDKTALKETLGA</sequence>
<organismHost>
    <name type="scientific">Lagothrix</name>
    <name type="common">woolly monkeys</name>
    <dbReference type="NCBI Taxonomy" id="9518"/>
</organismHost>
<accession>P01128</accession>
<accession>O41283</accession>
<keyword id="KW-0339">Growth factor</keyword>
<keyword id="KW-0553">Oncogene</keyword>